<organism>
    <name type="scientific">Nitrosopumilus maritimus (strain SCM1)</name>
    <dbReference type="NCBI Taxonomy" id="436308"/>
    <lineage>
        <taxon>Archaea</taxon>
        <taxon>Nitrososphaerota</taxon>
        <taxon>Nitrososphaeria</taxon>
        <taxon>Nitrosopumilales</taxon>
        <taxon>Nitrosopumilaceae</taxon>
        <taxon>Nitrosopumilus</taxon>
    </lineage>
</organism>
<evidence type="ECO:0000255" key="1">
    <source>
        <dbReference type="HAMAP-Rule" id="MF_01694"/>
    </source>
</evidence>
<evidence type="ECO:0000255" key="2">
    <source>
        <dbReference type="PROSITE-ProRule" id="PRU01266"/>
    </source>
</evidence>
<sequence length="326" mass="36271">MSTLEFIKECQEKVFSGNHITAEDAEKLLNIPEENLKDLARCANEITRDFNGEKVDVEQLNNIKKNACSEDCTFCGQSAFFDTGIETYQLPSPEEVVSKAQKAKEEGAESYCLVAAWREPSRTDFEKVCKIITEINDKVGISVECSLGFLTQEQAKKLKDLKVKRYNHNLETAKSKFPEICTTHTYEDRLETLGIARDAGLELCTGGIIGLGETREQRLELTLELARLYPEEVTINILVPVPGTPLELQTDLPNSEIVRMFSVIRFLLPESVIKISGGRETNLEDSGEELLQSGANGIITSGYLTMGGNEAQKDHAMIEKIGLKSQ</sequence>
<protein>
    <recommendedName>
        <fullName evidence="1">Biotin synthase</fullName>
        <ecNumber evidence="1">2.8.1.6</ecNumber>
    </recommendedName>
</protein>
<reference key="1">
    <citation type="journal article" date="2010" name="Proc. Natl. Acad. Sci. U.S.A.">
        <title>Nitrosopumilus maritimus genome reveals unique mechanisms for nitrification and autotrophy in globally distributed marine crenarchaea.</title>
        <authorList>
            <person name="Walker C.B."/>
            <person name="de la Torre J.R."/>
            <person name="Klotz M.G."/>
            <person name="Urakawa H."/>
            <person name="Pinel N."/>
            <person name="Arp D.J."/>
            <person name="Brochier-Armanet C."/>
            <person name="Chain P.S."/>
            <person name="Chan P.P."/>
            <person name="Gollabgir A."/>
            <person name="Hemp J."/>
            <person name="Hugler M."/>
            <person name="Karr E.A."/>
            <person name="Konneke M."/>
            <person name="Shin M."/>
            <person name="Lawton T.J."/>
            <person name="Lowe T."/>
            <person name="Martens-Habbena W."/>
            <person name="Sayavedra-Soto L.A."/>
            <person name="Lang D."/>
            <person name="Sievert S.M."/>
            <person name="Rosenzweig A.C."/>
            <person name="Manning G."/>
            <person name="Stahl D.A."/>
        </authorList>
    </citation>
    <scope>NUCLEOTIDE SEQUENCE [LARGE SCALE GENOMIC DNA]</scope>
    <source>
        <strain>SCM1</strain>
    </source>
</reference>
<accession>A9A5K6</accession>
<dbReference type="EC" id="2.8.1.6" evidence="1"/>
<dbReference type="EMBL" id="CP000866">
    <property type="protein sequence ID" value="ABX12717.1"/>
    <property type="molecule type" value="Genomic_DNA"/>
</dbReference>
<dbReference type="RefSeq" id="WP_012215204.1">
    <property type="nucleotide sequence ID" value="NC_010085.1"/>
</dbReference>
<dbReference type="SMR" id="A9A5K6"/>
<dbReference type="STRING" id="436308.Nmar_0821"/>
<dbReference type="EnsemblBacteria" id="ABX12717">
    <property type="protein sequence ID" value="ABX12717"/>
    <property type="gene ID" value="Nmar_0821"/>
</dbReference>
<dbReference type="GeneID" id="5773808"/>
<dbReference type="KEGG" id="nmr:Nmar_0821"/>
<dbReference type="eggNOG" id="arCOG00658">
    <property type="taxonomic scope" value="Archaea"/>
</dbReference>
<dbReference type="HOGENOM" id="CLU_033172_2_1_2"/>
<dbReference type="InParanoid" id="A9A5K6"/>
<dbReference type="OrthoDB" id="9264at2157"/>
<dbReference type="PhylomeDB" id="A9A5K6"/>
<dbReference type="UniPathway" id="UPA00078">
    <property type="reaction ID" value="UER00162"/>
</dbReference>
<dbReference type="Proteomes" id="UP000000792">
    <property type="component" value="Chromosome"/>
</dbReference>
<dbReference type="GO" id="GO:0051537">
    <property type="term" value="F:2 iron, 2 sulfur cluster binding"/>
    <property type="evidence" value="ECO:0000318"/>
    <property type="project" value="GO_Central"/>
</dbReference>
<dbReference type="GO" id="GO:0051539">
    <property type="term" value="F:4 iron, 4 sulfur cluster binding"/>
    <property type="evidence" value="ECO:0007669"/>
    <property type="project" value="UniProtKB-KW"/>
</dbReference>
<dbReference type="GO" id="GO:0004076">
    <property type="term" value="F:biotin synthase activity"/>
    <property type="evidence" value="ECO:0000318"/>
    <property type="project" value="GO_Central"/>
</dbReference>
<dbReference type="GO" id="GO:0005506">
    <property type="term" value="F:iron ion binding"/>
    <property type="evidence" value="ECO:0007669"/>
    <property type="project" value="UniProtKB-UniRule"/>
</dbReference>
<dbReference type="GO" id="GO:0009102">
    <property type="term" value="P:biotin biosynthetic process"/>
    <property type="evidence" value="ECO:0000318"/>
    <property type="project" value="GO_Central"/>
</dbReference>
<dbReference type="CDD" id="cd01335">
    <property type="entry name" value="Radical_SAM"/>
    <property type="match status" value="1"/>
</dbReference>
<dbReference type="FunFam" id="3.20.20.70:FF:000026">
    <property type="entry name" value="Biotin synthase"/>
    <property type="match status" value="1"/>
</dbReference>
<dbReference type="Gene3D" id="3.20.20.70">
    <property type="entry name" value="Aldolase class I"/>
    <property type="match status" value="1"/>
</dbReference>
<dbReference type="HAMAP" id="MF_01694">
    <property type="entry name" value="BioB"/>
    <property type="match status" value="1"/>
</dbReference>
<dbReference type="InterPro" id="IPR013785">
    <property type="entry name" value="Aldolase_TIM"/>
</dbReference>
<dbReference type="InterPro" id="IPR010722">
    <property type="entry name" value="BATS_dom"/>
</dbReference>
<dbReference type="InterPro" id="IPR002684">
    <property type="entry name" value="Biotin_synth/BioAB"/>
</dbReference>
<dbReference type="InterPro" id="IPR024177">
    <property type="entry name" value="Biotin_synthase"/>
</dbReference>
<dbReference type="InterPro" id="IPR006638">
    <property type="entry name" value="Elp3/MiaA/NifB-like_rSAM"/>
</dbReference>
<dbReference type="InterPro" id="IPR007197">
    <property type="entry name" value="rSAM"/>
</dbReference>
<dbReference type="NCBIfam" id="TIGR00433">
    <property type="entry name" value="bioB"/>
    <property type="match status" value="1"/>
</dbReference>
<dbReference type="PANTHER" id="PTHR22976">
    <property type="entry name" value="BIOTIN SYNTHASE"/>
    <property type="match status" value="1"/>
</dbReference>
<dbReference type="PANTHER" id="PTHR22976:SF2">
    <property type="entry name" value="BIOTIN SYNTHASE, MITOCHONDRIAL"/>
    <property type="match status" value="1"/>
</dbReference>
<dbReference type="Pfam" id="PF06968">
    <property type="entry name" value="BATS"/>
    <property type="match status" value="1"/>
</dbReference>
<dbReference type="Pfam" id="PF04055">
    <property type="entry name" value="Radical_SAM"/>
    <property type="match status" value="1"/>
</dbReference>
<dbReference type="PIRSF" id="PIRSF001619">
    <property type="entry name" value="Biotin_synth"/>
    <property type="match status" value="1"/>
</dbReference>
<dbReference type="SFLD" id="SFLDG01278">
    <property type="entry name" value="biotin_synthase_like"/>
    <property type="match status" value="1"/>
</dbReference>
<dbReference type="SFLD" id="SFLDS00029">
    <property type="entry name" value="Radical_SAM"/>
    <property type="match status" value="1"/>
</dbReference>
<dbReference type="SMART" id="SM00876">
    <property type="entry name" value="BATS"/>
    <property type="match status" value="1"/>
</dbReference>
<dbReference type="SMART" id="SM00729">
    <property type="entry name" value="Elp3"/>
    <property type="match status" value="1"/>
</dbReference>
<dbReference type="SUPFAM" id="SSF102114">
    <property type="entry name" value="Radical SAM enzymes"/>
    <property type="match status" value="1"/>
</dbReference>
<dbReference type="PROSITE" id="PS51918">
    <property type="entry name" value="RADICAL_SAM"/>
    <property type="match status" value="1"/>
</dbReference>
<proteinExistence type="inferred from homology"/>
<gene>
    <name evidence="1" type="primary">bioB</name>
    <name type="ordered locus">Nmar_0821</name>
</gene>
<keyword id="KW-0001">2Fe-2S</keyword>
<keyword id="KW-0004">4Fe-4S</keyword>
<keyword id="KW-0093">Biotin biosynthesis</keyword>
<keyword id="KW-0408">Iron</keyword>
<keyword id="KW-0411">Iron-sulfur</keyword>
<keyword id="KW-0479">Metal-binding</keyword>
<keyword id="KW-1185">Reference proteome</keyword>
<keyword id="KW-0949">S-adenosyl-L-methionine</keyword>
<keyword id="KW-0808">Transferase</keyword>
<name>BIOB_NITMS</name>
<feature type="chain" id="PRO_0000381503" description="Biotin synthase">
    <location>
        <begin position="1"/>
        <end position="326"/>
    </location>
</feature>
<feature type="domain" description="Radical SAM core" evidence="2">
    <location>
        <begin position="50"/>
        <end position="279"/>
    </location>
</feature>
<feature type="binding site" evidence="1">
    <location>
        <position position="68"/>
    </location>
    <ligand>
        <name>[4Fe-4S] cluster</name>
        <dbReference type="ChEBI" id="CHEBI:49883"/>
        <note>4Fe-4S-S-AdoMet</note>
    </ligand>
</feature>
<feature type="binding site" evidence="1">
    <location>
        <position position="72"/>
    </location>
    <ligand>
        <name>[4Fe-4S] cluster</name>
        <dbReference type="ChEBI" id="CHEBI:49883"/>
        <note>4Fe-4S-S-AdoMet</note>
    </ligand>
</feature>
<feature type="binding site" evidence="1">
    <location>
        <position position="75"/>
    </location>
    <ligand>
        <name>[4Fe-4S] cluster</name>
        <dbReference type="ChEBI" id="CHEBI:49883"/>
        <note>4Fe-4S-S-AdoMet</note>
    </ligand>
</feature>
<feature type="binding site" evidence="1">
    <location>
        <position position="112"/>
    </location>
    <ligand>
        <name>[2Fe-2S] cluster</name>
        <dbReference type="ChEBI" id="CHEBI:190135"/>
    </ligand>
</feature>
<feature type="binding site" evidence="1">
    <location>
        <position position="145"/>
    </location>
    <ligand>
        <name>[2Fe-2S] cluster</name>
        <dbReference type="ChEBI" id="CHEBI:190135"/>
    </ligand>
</feature>
<feature type="binding site" evidence="1">
    <location>
        <position position="204"/>
    </location>
    <ligand>
        <name>[2Fe-2S] cluster</name>
        <dbReference type="ChEBI" id="CHEBI:190135"/>
    </ligand>
</feature>
<feature type="binding site" evidence="1">
    <location>
        <position position="274"/>
    </location>
    <ligand>
        <name>[2Fe-2S] cluster</name>
        <dbReference type="ChEBI" id="CHEBI:190135"/>
    </ligand>
</feature>
<comment type="function">
    <text evidence="1">Catalyzes the conversion of dethiobiotin (DTB) to biotin by the insertion of a sulfur atom into dethiobiotin via a radical-based mechanism.</text>
</comment>
<comment type="catalytic activity">
    <reaction evidence="1">
        <text>(4R,5S)-dethiobiotin + (sulfur carrier)-SH + 2 reduced [2Fe-2S]-[ferredoxin] + 2 S-adenosyl-L-methionine = (sulfur carrier)-H + biotin + 2 5'-deoxyadenosine + 2 L-methionine + 2 oxidized [2Fe-2S]-[ferredoxin]</text>
        <dbReference type="Rhea" id="RHEA:22060"/>
        <dbReference type="Rhea" id="RHEA-COMP:10000"/>
        <dbReference type="Rhea" id="RHEA-COMP:10001"/>
        <dbReference type="Rhea" id="RHEA-COMP:14737"/>
        <dbReference type="Rhea" id="RHEA-COMP:14739"/>
        <dbReference type="ChEBI" id="CHEBI:17319"/>
        <dbReference type="ChEBI" id="CHEBI:29917"/>
        <dbReference type="ChEBI" id="CHEBI:33737"/>
        <dbReference type="ChEBI" id="CHEBI:33738"/>
        <dbReference type="ChEBI" id="CHEBI:57586"/>
        <dbReference type="ChEBI" id="CHEBI:57844"/>
        <dbReference type="ChEBI" id="CHEBI:59789"/>
        <dbReference type="ChEBI" id="CHEBI:64428"/>
        <dbReference type="ChEBI" id="CHEBI:149473"/>
        <dbReference type="EC" id="2.8.1.6"/>
    </reaction>
</comment>
<comment type="cofactor">
    <cofactor evidence="1">
        <name>[4Fe-4S] cluster</name>
        <dbReference type="ChEBI" id="CHEBI:49883"/>
    </cofactor>
    <text evidence="1">Binds 1 [4Fe-4S] cluster. The cluster is coordinated with 3 cysteines and an exchangeable S-adenosyl-L-methionine.</text>
</comment>
<comment type="cofactor">
    <cofactor evidence="1">
        <name>[2Fe-2S] cluster</name>
        <dbReference type="ChEBI" id="CHEBI:190135"/>
    </cofactor>
    <text evidence="1">Binds 1 [2Fe-2S] cluster. The cluster is coordinated with 3 cysteines and 1 arginine.</text>
</comment>
<comment type="pathway">
    <text evidence="1">Cofactor biosynthesis; biotin biosynthesis; biotin from 7,8-diaminononanoate: step 2/2.</text>
</comment>
<comment type="subunit">
    <text evidence="1">Homodimer.</text>
</comment>
<comment type="similarity">
    <text evidence="1">Belongs to the radical SAM superfamily. Biotin synthase family.</text>
</comment>